<name>AGGL_SCLS1</name>
<accession>A7EWX9</accession>
<evidence type="ECO:0000250" key="1"/>
<evidence type="ECO:0000250" key="2">
    <source>
        <dbReference type="UniProtKB" id="A7XUK7"/>
    </source>
</evidence>
<evidence type="ECO:0000255" key="3"/>
<evidence type="ECO:0000312" key="4">
    <source>
        <dbReference type="EMBL" id="EDN93971.1"/>
    </source>
</evidence>
<protein>
    <recommendedName>
        <fullName evidence="2">Agglutinin</fullName>
    </recommendedName>
</protein>
<dbReference type="EMBL" id="CH476634">
    <property type="protein sequence ID" value="EDN93971.1"/>
    <property type="molecule type" value="Genomic_DNA"/>
</dbReference>
<dbReference type="RefSeq" id="XP_001589205.1">
    <property type="nucleotide sequence ID" value="XM_001589155.1"/>
</dbReference>
<dbReference type="SMR" id="A7EWX9"/>
<dbReference type="GeneID" id="5485273"/>
<dbReference type="KEGG" id="ssl:SS1G_09838"/>
<dbReference type="VEuPathDB" id="FungiDB:sscle_01g001830"/>
<dbReference type="InParanoid" id="A7EWX9"/>
<dbReference type="OMA" id="GNGAFYI"/>
<dbReference type="OrthoDB" id="4476188at2759"/>
<dbReference type="Proteomes" id="UP000001312">
    <property type="component" value="Unassembled WGS sequence"/>
</dbReference>
<dbReference type="GO" id="GO:0030246">
    <property type="term" value="F:carbohydrate binding"/>
    <property type="evidence" value="ECO:0007669"/>
    <property type="project" value="UniProtKB-KW"/>
</dbReference>
<dbReference type="Gene3D" id="2.80.10.50">
    <property type="match status" value="1"/>
</dbReference>
<dbReference type="InterPro" id="IPR035992">
    <property type="entry name" value="Ricin_B-like_lectins"/>
</dbReference>
<dbReference type="InterPro" id="IPR000772">
    <property type="entry name" value="Ricin_B_lectin"/>
</dbReference>
<dbReference type="Pfam" id="PF14200">
    <property type="entry name" value="RicinB_lectin_2"/>
    <property type="match status" value="1"/>
</dbReference>
<dbReference type="SUPFAM" id="SSF50370">
    <property type="entry name" value="Ricin B-like lectins"/>
    <property type="match status" value="1"/>
</dbReference>
<gene>
    <name type="ORF">SS1G_09838</name>
</gene>
<comment type="function">
    <text evidence="1">Lectin that primarily recognizes glycans with a non-reducing terminal N-acetylgalactosamine (GalNAc), with a preference for the alpha- over the beta-anomer. Can also bind non-reducing terminal galactose (Gal) residues but with a lower affinity. Strongly interacts with glycolipid type glycans with terminal non-reducing Gal or GalNAc but fails to bind sialylated or fucosylated forms of the same glycans. Strongly interacts with galactosylated N-glycans, displaying highest affinity for alpha-1-3 branched mono-antennary N-glycans but also binding to multi-antennary glycans (By similarity).</text>
</comment>
<comment type="subunit">
    <text evidence="2">Homodimer.</text>
</comment>
<feature type="initiator methionine" description="Removed" evidence="2">
    <location>
        <position position="1"/>
    </location>
</feature>
<feature type="chain" id="PRO_0000424171" description="Agglutinin" evidence="2">
    <location>
        <begin position="2"/>
        <end position="153"/>
    </location>
</feature>
<feature type="domain" description="Ricin B-type lectin" evidence="3">
    <location>
        <begin position="58"/>
        <end position="153"/>
    </location>
</feature>
<feature type="binding site" evidence="2">
    <location>
        <begin position="22"/>
        <end position="25"/>
    </location>
    <ligand>
        <name>beta-D-galactosyl-(1-&gt;3)-N-acetyl-D-galactosamine</name>
        <dbReference type="ChEBI" id="CHEBI:546807"/>
    </ligand>
</feature>
<feature type="binding site" evidence="2">
    <location>
        <position position="46"/>
    </location>
    <ligand>
        <name>beta-D-galactosyl-(1-&gt;3)-N-acetyl-D-galactosamine</name>
        <dbReference type="ChEBI" id="CHEBI:546807"/>
    </ligand>
</feature>
<proteinExistence type="inferred from homology"/>
<keyword id="KW-0430">Lectin</keyword>
<keyword id="KW-1185">Reference proteome</keyword>
<organism>
    <name type="scientific">Sclerotinia sclerotiorum (strain ATCC 18683 / 1980 / Ss-1)</name>
    <name type="common">White mold</name>
    <name type="synonym">Whetzelinia sclerotiorum</name>
    <dbReference type="NCBI Taxonomy" id="665079"/>
    <lineage>
        <taxon>Eukaryota</taxon>
        <taxon>Fungi</taxon>
        <taxon>Dikarya</taxon>
        <taxon>Ascomycota</taxon>
        <taxon>Pezizomycotina</taxon>
        <taxon>Leotiomycetes</taxon>
        <taxon>Helotiales</taxon>
        <taxon>Sclerotiniaceae</taxon>
        <taxon>Sclerotinia</taxon>
    </lineage>
</organism>
<sequence length="153" mass="16740">MGFKGVGTYEIVPYQAPSLNLNAWEGKLEPGAVVRTYTRGDKPSDNAKWQVALVAGSGDSAEYLIINVHSGYFLTATKENHIVSTPQISPTDPSARWTIKPATTHQYEVFTINNKVSELGQLTVKDYSTHSGADVLSASAKTADNQKWYFDAK</sequence>
<reference evidence="4" key="1">
    <citation type="journal article" date="2011" name="PLoS Genet.">
        <title>Genomic analysis of the necrotrophic fungal pathogens Sclerotinia sclerotiorum and Botrytis cinerea.</title>
        <authorList>
            <person name="Amselem J."/>
            <person name="Cuomo C.A."/>
            <person name="van Kan J.A.L."/>
            <person name="Viaud M."/>
            <person name="Benito E.P."/>
            <person name="Couloux A."/>
            <person name="Coutinho P.M."/>
            <person name="de Vries R.P."/>
            <person name="Dyer P.S."/>
            <person name="Fillinger S."/>
            <person name="Fournier E."/>
            <person name="Gout L."/>
            <person name="Hahn M."/>
            <person name="Kohn L."/>
            <person name="Lapalu N."/>
            <person name="Plummer K.M."/>
            <person name="Pradier J.-M."/>
            <person name="Quevillon E."/>
            <person name="Sharon A."/>
            <person name="Simon A."/>
            <person name="ten Have A."/>
            <person name="Tudzynski B."/>
            <person name="Tudzynski P."/>
            <person name="Wincker P."/>
            <person name="Andrew M."/>
            <person name="Anthouard V."/>
            <person name="Beever R.E."/>
            <person name="Beffa R."/>
            <person name="Benoit I."/>
            <person name="Bouzid O."/>
            <person name="Brault B."/>
            <person name="Chen Z."/>
            <person name="Choquer M."/>
            <person name="Collemare J."/>
            <person name="Cotton P."/>
            <person name="Danchin E.G."/>
            <person name="Da Silva C."/>
            <person name="Gautier A."/>
            <person name="Giraud C."/>
            <person name="Giraud T."/>
            <person name="Gonzalez C."/>
            <person name="Grossetete S."/>
            <person name="Gueldener U."/>
            <person name="Henrissat B."/>
            <person name="Howlett B.J."/>
            <person name="Kodira C."/>
            <person name="Kretschmer M."/>
            <person name="Lappartient A."/>
            <person name="Leroch M."/>
            <person name="Levis C."/>
            <person name="Mauceli E."/>
            <person name="Neuveglise C."/>
            <person name="Oeser B."/>
            <person name="Pearson M."/>
            <person name="Poulain J."/>
            <person name="Poussereau N."/>
            <person name="Quesneville H."/>
            <person name="Rascle C."/>
            <person name="Schumacher J."/>
            <person name="Segurens B."/>
            <person name="Sexton A."/>
            <person name="Silva E."/>
            <person name="Sirven C."/>
            <person name="Soanes D.M."/>
            <person name="Talbot N.J."/>
            <person name="Templeton M."/>
            <person name="Yandava C."/>
            <person name="Yarden O."/>
            <person name="Zeng Q."/>
            <person name="Rollins J.A."/>
            <person name="Lebrun M.-H."/>
            <person name="Dickman M."/>
        </authorList>
    </citation>
    <scope>NUCLEOTIDE SEQUENCE [LARGE SCALE GENOMIC DNA]</scope>
    <source>
        <strain>ATCC 18683 / 1980 / Ss-1</strain>
    </source>
</reference>